<feature type="initiator methionine" description="Removed" evidence="8">
    <location>
        <position position="1"/>
    </location>
</feature>
<feature type="chain" id="PRO_0000053298" description="Myoglobin">
    <location>
        <begin position="2"/>
        <end position="154"/>
    </location>
</feature>
<feature type="domain" description="Globin" evidence="7">
    <location>
        <begin position="2"/>
        <end position="148"/>
    </location>
</feature>
<feature type="binding site" evidence="5">
    <location>
        <position position="65"/>
    </location>
    <ligand>
        <name>nitrite</name>
        <dbReference type="ChEBI" id="CHEBI:16301"/>
    </ligand>
</feature>
<feature type="binding site" evidence="3 7">
    <location>
        <position position="65"/>
    </location>
    <ligand>
        <name>O2</name>
        <dbReference type="ChEBI" id="CHEBI:15379"/>
    </ligand>
</feature>
<feature type="binding site" description="proximal binding residue" evidence="1">
    <location>
        <position position="94"/>
    </location>
    <ligand>
        <name>heme b</name>
        <dbReference type="ChEBI" id="CHEBI:60344"/>
    </ligand>
    <ligandPart>
        <name>Fe</name>
        <dbReference type="ChEBI" id="CHEBI:18248"/>
    </ligandPart>
</feature>
<feature type="modified residue" description="Phosphoserine" evidence="6">
    <location>
        <position position="4"/>
    </location>
</feature>
<feature type="modified residue" description="Phosphothreonine" evidence="4">
    <location>
        <position position="68"/>
    </location>
</feature>
<sequence length="154" mass="17216">MGLSDGEWQLVLNVWGKVEADLAGHGQDILIRLFKGHPETLEKFDKFKHLKTEADMKASEDLKKHGNTVLTALGAILKKKGHHEAELKPLAQSHATKHKIPIKYLEFISEAIIHVLHSRHPAEFGADAQGAMNKALELFRKDIAAKYKELGFHG</sequence>
<gene>
    <name type="primary">MB</name>
</gene>
<reference key="1">
    <citation type="journal article" date="1978" name="Biochemistry">
        <title>Complete amino acid sequence of myoglobin from the pilot whale, Globicephala melaena.</title>
        <authorList>
            <person name="Jones B.N."/>
            <person name="Dwulet F.E."/>
            <person name="Lehman L.D."/>
            <person name="Garner M.H."/>
            <person name="Bogardt R.A. Jr."/>
            <person name="Garner W.H."/>
            <person name="Gurd F.R.N."/>
        </authorList>
    </citation>
    <scope>PROTEIN SEQUENCE OF 2-154</scope>
    <source>
        <tissue>Skeletal muscle</tissue>
    </source>
</reference>
<protein>
    <recommendedName>
        <fullName>Myoglobin</fullName>
    </recommendedName>
    <alternativeName>
        <fullName evidence="1">Nitrite reductase MB</fullName>
        <ecNumber evidence="1">1.7.-.-</ecNumber>
    </alternativeName>
    <alternativeName>
        <fullName evidence="1">Pseudoperoxidase MB</fullName>
        <ecNumber evidence="1">1.11.1.-</ecNumber>
    </alternativeName>
</protein>
<dbReference type="EC" id="1.7.-.-" evidence="1"/>
<dbReference type="EC" id="1.11.1.-" evidence="1"/>
<dbReference type="PIR" id="A02496">
    <property type="entry name" value="MYWHT"/>
</dbReference>
<dbReference type="RefSeq" id="XP_030711254.1">
    <property type="nucleotide sequence ID" value="XM_030855394.3"/>
</dbReference>
<dbReference type="RefSeq" id="XP_060162219.1">
    <property type="nucleotide sequence ID" value="XM_060306236.2"/>
</dbReference>
<dbReference type="SMR" id="P02174"/>
<dbReference type="GeneID" id="115852536"/>
<dbReference type="GO" id="GO:0070062">
    <property type="term" value="C:extracellular exosome"/>
    <property type="evidence" value="ECO:0007669"/>
    <property type="project" value="TreeGrafter"/>
</dbReference>
<dbReference type="GO" id="GO:0016528">
    <property type="term" value="C:sarcoplasm"/>
    <property type="evidence" value="ECO:0000250"/>
    <property type="project" value="UniProtKB"/>
</dbReference>
<dbReference type="GO" id="GO:0020037">
    <property type="term" value="F:heme binding"/>
    <property type="evidence" value="ECO:0007669"/>
    <property type="project" value="InterPro"/>
</dbReference>
<dbReference type="GO" id="GO:0046872">
    <property type="term" value="F:metal ion binding"/>
    <property type="evidence" value="ECO:0007669"/>
    <property type="project" value="UniProtKB-KW"/>
</dbReference>
<dbReference type="GO" id="GO:0098809">
    <property type="term" value="F:nitrite reductase activity"/>
    <property type="evidence" value="ECO:0000250"/>
    <property type="project" value="UniProtKB"/>
</dbReference>
<dbReference type="GO" id="GO:0019825">
    <property type="term" value="F:oxygen binding"/>
    <property type="evidence" value="ECO:0007669"/>
    <property type="project" value="InterPro"/>
</dbReference>
<dbReference type="GO" id="GO:0005344">
    <property type="term" value="F:oxygen carrier activity"/>
    <property type="evidence" value="ECO:0000250"/>
    <property type="project" value="UniProtKB"/>
</dbReference>
<dbReference type="GO" id="GO:0004601">
    <property type="term" value="F:peroxidase activity"/>
    <property type="evidence" value="ECO:0000250"/>
    <property type="project" value="UniProtKB"/>
</dbReference>
<dbReference type="GO" id="GO:0019430">
    <property type="term" value="P:removal of superoxide radicals"/>
    <property type="evidence" value="ECO:0000250"/>
    <property type="project" value="UniProtKB"/>
</dbReference>
<dbReference type="CDD" id="cd08926">
    <property type="entry name" value="Mb"/>
    <property type="match status" value="1"/>
</dbReference>
<dbReference type="Gene3D" id="6.10.140.2100">
    <property type="match status" value="1"/>
</dbReference>
<dbReference type="Gene3D" id="6.10.140.2110">
    <property type="match status" value="1"/>
</dbReference>
<dbReference type="InterPro" id="IPR000971">
    <property type="entry name" value="Globin"/>
</dbReference>
<dbReference type="InterPro" id="IPR009050">
    <property type="entry name" value="Globin-like_sf"/>
</dbReference>
<dbReference type="InterPro" id="IPR002335">
    <property type="entry name" value="Myoglobin"/>
</dbReference>
<dbReference type="PANTHER" id="PTHR47132">
    <property type="entry name" value="MYOGLOBIN"/>
    <property type="match status" value="1"/>
</dbReference>
<dbReference type="PANTHER" id="PTHR47132:SF1">
    <property type="entry name" value="MYOGLOBIN"/>
    <property type="match status" value="1"/>
</dbReference>
<dbReference type="Pfam" id="PF00042">
    <property type="entry name" value="Globin"/>
    <property type="match status" value="1"/>
</dbReference>
<dbReference type="PRINTS" id="PR00613">
    <property type="entry name" value="MYOGLOBIN"/>
</dbReference>
<dbReference type="SUPFAM" id="SSF46458">
    <property type="entry name" value="Globin-like"/>
    <property type="match status" value="1"/>
</dbReference>
<dbReference type="PROSITE" id="PS01033">
    <property type="entry name" value="GLOBIN"/>
    <property type="match status" value="1"/>
</dbReference>
<name>MYG_GLOME</name>
<accession>P02174</accession>
<proteinExistence type="evidence at protein level"/>
<organism>
    <name type="scientific">Globicephala melas</name>
    <name type="common">Long-finned pilot whale</name>
    <name type="synonym">Globicephala melaena</name>
    <dbReference type="NCBI Taxonomy" id="9731"/>
    <lineage>
        <taxon>Eukaryota</taxon>
        <taxon>Metazoa</taxon>
        <taxon>Chordata</taxon>
        <taxon>Craniata</taxon>
        <taxon>Vertebrata</taxon>
        <taxon>Euteleostomi</taxon>
        <taxon>Mammalia</taxon>
        <taxon>Eutheria</taxon>
        <taxon>Laurasiatheria</taxon>
        <taxon>Artiodactyla</taxon>
        <taxon>Whippomorpha</taxon>
        <taxon>Cetacea</taxon>
        <taxon>Odontoceti</taxon>
        <taxon>Delphinidae</taxon>
        <taxon>Globicephala</taxon>
    </lineage>
</organism>
<keyword id="KW-0963">Cytoplasm</keyword>
<keyword id="KW-0903">Direct protein sequencing</keyword>
<keyword id="KW-0349">Heme</keyword>
<keyword id="KW-0408">Iron</keyword>
<keyword id="KW-0479">Metal-binding</keyword>
<keyword id="KW-0514">Muscle protein</keyword>
<keyword id="KW-0560">Oxidoreductase</keyword>
<keyword id="KW-0561">Oxygen transport</keyword>
<keyword id="KW-0597">Phosphoprotein</keyword>
<keyword id="KW-0813">Transport</keyword>
<evidence type="ECO:0000250" key="1">
    <source>
        <dbReference type="UniProtKB" id="P02144"/>
    </source>
</evidence>
<evidence type="ECO:0000250" key="2">
    <source>
        <dbReference type="UniProtKB" id="P02185"/>
    </source>
</evidence>
<evidence type="ECO:0000250" key="3">
    <source>
        <dbReference type="UniProtKB" id="P02189"/>
    </source>
</evidence>
<evidence type="ECO:0000250" key="4">
    <source>
        <dbReference type="UniProtKB" id="P04247"/>
    </source>
</evidence>
<evidence type="ECO:0000250" key="5">
    <source>
        <dbReference type="UniProtKB" id="P68082"/>
    </source>
</evidence>
<evidence type="ECO:0000250" key="6">
    <source>
        <dbReference type="UniProtKB" id="Q9QZ76"/>
    </source>
</evidence>
<evidence type="ECO:0000255" key="7">
    <source>
        <dbReference type="PROSITE-ProRule" id="PRU00238"/>
    </source>
</evidence>
<evidence type="ECO:0000269" key="8">
    <source>
    </source>
</evidence>
<comment type="function">
    <text evidence="1">Monomeric heme protein which primary function is to store oxygen and facilitate its diffusion within muscle tissues. Reversibly binds oxygen through a pentacoordinated heme iron and enables its timely and efficient release as needed during periods of heightened demand. Depending on the oxidative conditions of tissues and cells, and in addition to its ability to bind oxygen, it also has a nitrite reductase activity whereby it regulates the production of bioactive nitric oxide. Under stress conditions, like hypoxia and anoxia, it also protects cells against reactive oxygen species thanks to its pseudoperoxidase activity.</text>
</comment>
<comment type="catalytic activity">
    <reaction evidence="1">
        <text>Fe(III)-heme b-[protein] + nitric oxide + H2O = Fe(II)-heme b-[protein] + nitrite + 2 H(+)</text>
        <dbReference type="Rhea" id="RHEA:77711"/>
        <dbReference type="Rhea" id="RHEA-COMP:18975"/>
        <dbReference type="Rhea" id="RHEA-COMP:18976"/>
        <dbReference type="ChEBI" id="CHEBI:15377"/>
        <dbReference type="ChEBI" id="CHEBI:15378"/>
        <dbReference type="ChEBI" id="CHEBI:16301"/>
        <dbReference type="ChEBI" id="CHEBI:16480"/>
        <dbReference type="ChEBI" id="CHEBI:55376"/>
        <dbReference type="ChEBI" id="CHEBI:60344"/>
    </reaction>
    <physiologicalReaction direction="right-to-left" evidence="1">
        <dbReference type="Rhea" id="RHEA:77713"/>
    </physiologicalReaction>
</comment>
<comment type="catalytic activity">
    <reaction evidence="1">
        <text>H2O2 + AH2 = A + 2 H2O</text>
        <dbReference type="Rhea" id="RHEA:30275"/>
        <dbReference type="ChEBI" id="CHEBI:13193"/>
        <dbReference type="ChEBI" id="CHEBI:15377"/>
        <dbReference type="ChEBI" id="CHEBI:16240"/>
        <dbReference type="ChEBI" id="CHEBI:17499"/>
    </reaction>
</comment>
<comment type="subunit">
    <text evidence="2">Monomeric.</text>
</comment>
<comment type="subcellular location">
    <subcellularLocation>
        <location evidence="1">Cytoplasm</location>
        <location evidence="1">Sarcoplasm</location>
    </subcellularLocation>
</comment>
<comment type="similarity">
    <text evidence="7">Belongs to the globin family.</text>
</comment>